<sequence>MTDRFELVSPYSPAGDQPAAIDKLVANFEAGLAKQTLLGVTGSGKTYTIANVVQQVQKPTLVMAPNKTLAAQLYGEFKSFFPNNAVEYFVSYYDYYQPEAYVPSSDTFIEKDSSINEHIEQMRLSATKTLLSRRDSLVVATVSAIYGLGAPEDYLSLRLILSIGEHIDQRQLIRHLTDLQYTRNEFELTRGAFRVRGEVLDVFPAESDTEALRIELFDGDIEQLTLFDPLTGETLRKLQRYTVYPKTHYATTRERTLSAVDTIKEELKERLEQLYSQNKLVEAQRLAQRTQFDLEMMAEVGFCNGIENYSRHLTGKAPGEPPPTLFDYLPPDALLVIDESHVTIPQIGAMYKGDRSRKETLVEFGFRLPSALDNRPLRFEEWEARSPRSIYVSATPGPYELRESAGEITELVVRPTGLIDPVVEIRPVGTQVDDLMSEVHERIKLGDRVLVTTLTKRMAENLTEYLGEHGIRVRYLHSDIDTVERVEIIRDLRLGKFDVLVGINLLREGLDMPEVSLVAILDADKEGFLRSTGSLIQTIGRAARNLRGKAILYADKMTRSMQAAIDETDRRREKQVEYNLEHGITPKSVARPISDIMEGAREDAAEKKAGKGRSKSRQVAEEPADYRAMGPAEIAGKLKALEQKMYQHAKDLEFEAAAQIRDQILKLKAASLA</sequence>
<name>UVRB_XANC8</name>
<comment type="function">
    <text evidence="1">The UvrABC repair system catalyzes the recognition and processing of DNA lesions. A damage recognition complex composed of 2 UvrA and 2 UvrB subunits scans DNA for abnormalities. Upon binding of the UvrA(2)B(2) complex to a putative damaged site, the DNA wraps around one UvrB monomer. DNA wrap is dependent on ATP binding by UvrB and probably causes local melting of the DNA helix, facilitating insertion of UvrB beta-hairpin between the DNA strands. Then UvrB probes one DNA strand for the presence of a lesion. If a lesion is found the UvrA subunits dissociate and the UvrB-DNA preincision complex is formed. This complex is subsequently bound by UvrC and the second UvrB is released. If no lesion is found, the DNA wraps around the other UvrB subunit that will check the other stand for damage.</text>
</comment>
<comment type="subunit">
    <text evidence="1">Forms a heterotetramer with UvrA during the search for lesions. Interacts with UvrC in an incision complex.</text>
</comment>
<comment type="subcellular location">
    <subcellularLocation>
        <location evidence="1">Cytoplasm</location>
    </subcellularLocation>
</comment>
<comment type="domain">
    <text evidence="1">The beta-hairpin motif is involved in DNA binding.</text>
</comment>
<comment type="similarity">
    <text evidence="1">Belongs to the UvrB family.</text>
</comment>
<evidence type="ECO:0000255" key="1">
    <source>
        <dbReference type="HAMAP-Rule" id="MF_00204"/>
    </source>
</evidence>
<evidence type="ECO:0000256" key="2">
    <source>
        <dbReference type="SAM" id="MobiDB-lite"/>
    </source>
</evidence>
<keyword id="KW-0067">ATP-binding</keyword>
<keyword id="KW-0963">Cytoplasm</keyword>
<keyword id="KW-0227">DNA damage</keyword>
<keyword id="KW-0228">DNA excision</keyword>
<keyword id="KW-0234">DNA repair</keyword>
<keyword id="KW-0267">Excision nuclease</keyword>
<keyword id="KW-0547">Nucleotide-binding</keyword>
<keyword id="KW-0742">SOS response</keyword>
<proteinExistence type="inferred from homology"/>
<reference key="1">
    <citation type="journal article" date="2005" name="Genome Res.">
        <title>Comparative and functional genomic analyses of the pathogenicity of phytopathogen Xanthomonas campestris pv. campestris.</title>
        <authorList>
            <person name="Qian W."/>
            <person name="Jia Y."/>
            <person name="Ren S.-X."/>
            <person name="He Y.-Q."/>
            <person name="Feng J.-X."/>
            <person name="Lu L.-F."/>
            <person name="Sun Q."/>
            <person name="Ying G."/>
            <person name="Tang D.-J."/>
            <person name="Tang H."/>
            <person name="Wu W."/>
            <person name="Hao P."/>
            <person name="Wang L."/>
            <person name="Jiang B.-L."/>
            <person name="Zeng S."/>
            <person name="Gu W.-Y."/>
            <person name="Lu G."/>
            <person name="Rong L."/>
            <person name="Tian Y."/>
            <person name="Yao Z."/>
            <person name="Fu G."/>
            <person name="Chen B."/>
            <person name="Fang R."/>
            <person name="Qiang B."/>
            <person name="Chen Z."/>
            <person name="Zhao G.-P."/>
            <person name="Tang J.-L."/>
            <person name="He C."/>
        </authorList>
    </citation>
    <scope>NUCLEOTIDE SEQUENCE [LARGE SCALE GENOMIC DNA]</scope>
    <source>
        <strain>8004</strain>
    </source>
</reference>
<accession>Q4UW79</accession>
<organism>
    <name type="scientific">Xanthomonas campestris pv. campestris (strain 8004)</name>
    <dbReference type="NCBI Taxonomy" id="314565"/>
    <lineage>
        <taxon>Bacteria</taxon>
        <taxon>Pseudomonadati</taxon>
        <taxon>Pseudomonadota</taxon>
        <taxon>Gammaproteobacteria</taxon>
        <taxon>Lysobacterales</taxon>
        <taxon>Lysobacteraceae</taxon>
        <taxon>Xanthomonas</taxon>
    </lineage>
</organism>
<gene>
    <name evidence="1" type="primary">uvrB</name>
    <name type="ordered locus">XC_1628</name>
</gene>
<dbReference type="EMBL" id="CP000050">
    <property type="protein sequence ID" value="AAY48694.1"/>
    <property type="molecule type" value="Genomic_DNA"/>
</dbReference>
<dbReference type="RefSeq" id="WP_011037621.1">
    <property type="nucleotide sequence ID" value="NZ_CP155948.1"/>
</dbReference>
<dbReference type="SMR" id="Q4UW79"/>
<dbReference type="KEGG" id="xcb:XC_1628"/>
<dbReference type="HOGENOM" id="CLU_009621_2_1_6"/>
<dbReference type="Proteomes" id="UP000000420">
    <property type="component" value="Chromosome"/>
</dbReference>
<dbReference type="GO" id="GO:0005737">
    <property type="term" value="C:cytoplasm"/>
    <property type="evidence" value="ECO:0007669"/>
    <property type="project" value="UniProtKB-SubCell"/>
</dbReference>
<dbReference type="GO" id="GO:0009380">
    <property type="term" value="C:excinuclease repair complex"/>
    <property type="evidence" value="ECO:0007669"/>
    <property type="project" value="InterPro"/>
</dbReference>
<dbReference type="GO" id="GO:0005524">
    <property type="term" value="F:ATP binding"/>
    <property type="evidence" value="ECO:0007669"/>
    <property type="project" value="UniProtKB-UniRule"/>
</dbReference>
<dbReference type="GO" id="GO:0016887">
    <property type="term" value="F:ATP hydrolysis activity"/>
    <property type="evidence" value="ECO:0007669"/>
    <property type="project" value="InterPro"/>
</dbReference>
<dbReference type="GO" id="GO:0003677">
    <property type="term" value="F:DNA binding"/>
    <property type="evidence" value="ECO:0007669"/>
    <property type="project" value="UniProtKB-UniRule"/>
</dbReference>
<dbReference type="GO" id="GO:0009381">
    <property type="term" value="F:excinuclease ABC activity"/>
    <property type="evidence" value="ECO:0007669"/>
    <property type="project" value="UniProtKB-UniRule"/>
</dbReference>
<dbReference type="GO" id="GO:0006289">
    <property type="term" value="P:nucleotide-excision repair"/>
    <property type="evidence" value="ECO:0007669"/>
    <property type="project" value="UniProtKB-UniRule"/>
</dbReference>
<dbReference type="GO" id="GO:0009432">
    <property type="term" value="P:SOS response"/>
    <property type="evidence" value="ECO:0007669"/>
    <property type="project" value="UniProtKB-UniRule"/>
</dbReference>
<dbReference type="CDD" id="cd17916">
    <property type="entry name" value="DEXHc_UvrB"/>
    <property type="match status" value="1"/>
</dbReference>
<dbReference type="CDD" id="cd18790">
    <property type="entry name" value="SF2_C_UvrB"/>
    <property type="match status" value="1"/>
</dbReference>
<dbReference type="FunFam" id="3.40.50.300:FF:000477">
    <property type="entry name" value="UvrABC system protein B"/>
    <property type="match status" value="1"/>
</dbReference>
<dbReference type="Gene3D" id="6.10.140.240">
    <property type="match status" value="1"/>
</dbReference>
<dbReference type="Gene3D" id="3.40.50.300">
    <property type="entry name" value="P-loop containing nucleotide triphosphate hydrolases"/>
    <property type="match status" value="3"/>
</dbReference>
<dbReference type="Gene3D" id="4.10.860.10">
    <property type="entry name" value="UVR domain"/>
    <property type="match status" value="1"/>
</dbReference>
<dbReference type="HAMAP" id="MF_00204">
    <property type="entry name" value="UvrB"/>
    <property type="match status" value="1"/>
</dbReference>
<dbReference type="InterPro" id="IPR006935">
    <property type="entry name" value="Helicase/UvrB_N"/>
</dbReference>
<dbReference type="InterPro" id="IPR014001">
    <property type="entry name" value="Helicase_ATP-bd"/>
</dbReference>
<dbReference type="InterPro" id="IPR001650">
    <property type="entry name" value="Helicase_C-like"/>
</dbReference>
<dbReference type="InterPro" id="IPR027417">
    <property type="entry name" value="P-loop_NTPase"/>
</dbReference>
<dbReference type="InterPro" id="IPR001943">
    <property type="entry name" value="UVR_dom"/>
</dbReference>
<dbReference type="InterPro" id="IPR036876">
    <property type="entry name" value="UVR_dom_sf"/>
</dbReference>
<dbReference type="InterPro" id="IPR004807">
    <property type="entry name" value="UvrB"/>
</dbReference>
<dbReference type="InterPro" id="IPR041471">
    <property type="entry name" value="UvrB_inter"/>
</dbReference>
<dbReference type="InterPro" id="IPR024759">
    <property type="entry name" value="UvrB_YAD/RRR_dom"/>
</dbReference>
<dbReference type="NCBIfam" id="NF003673">
    <property type="entry name" value="PRK05298.1"/>
    <property type="match status" value="1"/>
</dbReference>
<dbReference type="NCBIfam" id="TIGR00631">
    <property type="entry name" value="uvrb"/>
    <property type="match status" value="1"/>
</dbReference>
<dbReference type="PANTHER" id="PTHR24029">
    <property type="entry name" value="UVRABC SYSTEM PROTEIN B"/>
    <property type="match status" value="1"/>
</dbReference>
<dbReference type="PANTHER" id="PTHR24029:SF0">
    <property type="entry name" value="UVRABC SYSTEM PROTEIN B"/>
    <property type="match status" value="1"/>
</dbReference>
<dbReference type="Pfam" id="PF00271">
    <property type="entry name" value="Helicase_C"/>
    <property type="match status" value="1"/>
</dbReference>
<dbReference type="Pfam" id="PF04851">
    <property type="entry name" value="ResIII"/>
    <property type="match status" value="1"/>
</dbReference>
<dbReference type="Pfam" id="PF02151">
    <property type="entry name" value="UVR"/>
    <property type="match status" value="1"/>
</dbReference>
<dbReference type="Pfam" id="PF12344">
    <property type="entry name" value="UvrB"/>
    <property type="match status" value="1"/>
</dbReference>
<dbReference type="Pfam" id="PF17757">
    <property type="entry name" value="UvrB_inter"/>
    <property type="match status" value="1"/>
</dbReference>
<dbReference type="SMART" id="SM00487">
    <property type="entry name" value="DEXDc"/>
    <property type="match status" value="1"/>
</dbReference>
<dbReference type="SMART" id="SM00490">
    <property type="entry name" value="HELICc"/>
    <property type="match status" value="1"/>
</dbReference>
<dbReference type="SUPFAM" id="SSF46600">
    <property type="entry name" value="C-terminal UvrC-binding domain of UvrB"/>
    <property type="match status" value="1"/>
</dbReference>
<dbReference type="SUPFAM" id="SSF52540">
    <property type="entry name" value="P-loop containing nucleoside triphosphate hydrolases"/>
    <property type="match status" value="2"/>
</dbReference>
<dbReference type="PROSITE" id="PS51192">
    <property type="entry name" value="HELICASE_ATP_BIND_1"/>
    <property type="match status" value="1"/>
</dbReference>
<dbReference type="PROSITE" id="PS51194">
    <property type="entry name" value="HELICASE_CTER"/>
    <property type="match status" value="1"/>
</dbReference>
<dbReference type="PROSITE" id="PS50151">
    <property type="entry name" value="UVR"/>
    <property type="match status" value="1"/>
</dbReference>
<feature type="chain" id="PRO_0000227384" description="UvrABC system protein B">
    <location>
        <begin position="1"/>
        <end position="673"/>
    </location>
</feature>
<feature type="domain" description="Helicase ATP-binding" evidence="1">
    <location>
        <begin position="26"/>
        <end position="414"/>
    </location>
</feature>
<feature type="domain" description="Helicase C-terminal" evidence="1">
    <location>
        <begin position="431"/>
        <end position="597"/>
    </location>
</feature>
<feature type="domain" description="UVR" evidence="1">
    <location>
        <begin position="635"/>
        <end position="670"/>
    </location>
</feature>
<feature type="region of interest" description="Disordered" evidence="2">
    <location>
        <begin position="601"/>
        <end position="626"/>
    </location>
</feature>
<feature type="short sequence motif" description="Beta-hairpin">
    <location>
        <begin position="92"/>
        <end position="115"/>
    </location>
</feature>
<feature type="binding site" evidence="1">
    <location>
        <begin position="39"/>
        <end position="46"/>
    </location>
    <ligand>
        <name>ATP</name>
        <dbReference type="ChEBI" id="CHEBI:30616"/>
    </ligand>
</feature>
<protein>
    <recommendedName>
        <fullName evidence="1">UvrABC system protein B</fullName>
        <shortName evidence="1">Protein UvrB</shortName>
    </recommendedName>
    <alternativeName>
        <fullName evidence="1">Excinuclease ABC subunit B</fullName>
    </alternativeName>
</protein>